<evidence type="ECO:0000255" key="1">
    <source>
        <dbReference type="HAMAP-Rule" id="MF_00918"/>
    </source>
</evidence>
<keyword id="KW-0963">Cytoplasm</keyword>
<keyword id="KW-0238">DNA-binding</keyword>
<keyword id="KW-1185">Reference proteome</keyword>
<keyword id="KW-0804">Transcription</keyword>
<keyword id="KW-0805">Transcription regulation</keyword>
<protein>
    <recommendedName>
        <fullName evidence="1">Probable transcriptional regulatory protein Exig_1693</fullName>
    </recommendedName>
</protein>
<accession>B1YHH3</accession>
<comment type="subcellular location">
    <subcellularLocation>
        <location evidence="1">Cytoplasm</location>
    </subcellularLocation>
</comment>
<comment type="similarity">
    <text evidence="1">Belongs to the TACO1 family. YeeN subfamily.</text>
</comment>
<sequence>MGRKWNNIKEKKASKDKNTSRVYAKFGREIYVAAKQGEPDPESNQALKVVLERAKTYSVPRAIVDRAIEKAKGGAEENFDVLRYEGFGPSGSMVIVETLTNNVNRTASDVRAAFGKNGGNMGVSGSVAYMFDATAIFAFEGKTADDILELMMEADIDVRDILEEEESVIIYAEPEQFHAVQETLKEAGITDFSVAELVMLAQNEVTLSDEDVQQFEKMIDALEDLEDVQQVYHNVEL</sequence>
<proteinExistence type="inferred from homology"/>
<dbReference type="EMBL" id="CP001022">
    <property type="protein sequence ID" value="ACB61146.1"/>
    <property type="molecule type" value="Genomic_DNA"/>
</dbReference>
<dbReference type="RefSeq" id="WP_012370564.1">
    <property type="nucleotide sequence ID" value="NC_010556.1"/>
</dbReference>
<dbReference type="SMR" id="B1YHH3"/>
<dbReference type="STRING" id="262543.Exig_1693"/>
<dbReference type="KEGG" id="esi:Exig_1693"/>
<dbReference type="eggNOG" id="COG0217">
    <property type="taxonomic scope" value="Bacteria"/>
</dbReference>
<dbReference type="HOGENOM" id="CLU_062974_2_0_9"/>
<dbReference type="OrthoDB" id="9781053at2"/>
<dbReference type="Proteomes" id="UP000001681">
    <property type="component" value="Chromosome"/>
</dbReference>
<dbReference type="GO" id="GO:0005829">
    <property type="term" value="C:cytosol"/>
    <property type="evidence" value="ECO:0007669"/>
    <property type="project" value="TreeGrafter"/>
</dbReference>
<dbReference type="GO" id="GO:0003677">
    <property type="term" value="F:DNA binding"/>
    <property type="evidence" value="ECO:0007669"/>
    <property type="project" value="UniProtKB-UniRule"/>
</dbReference>
<dbReference type="GO" id="GO:0006355">
    <property type="term" value="P:regulation of DNA-templated transcription"/>
    <property type="evidence" value="ECO:0007669"/>
    <property type="project" value="UniProtKB-UniRule"/>
</dbReference>
<dbReference type="FunFam" id="1.10.10.200:FF:000003">
    <property type="entry name" value="Probable transcriptional regulatory protein YeeN"/>
    <property type="match status" value="1"/>
</dbReference>
<dbReference type="Gene3D" id="1.10.10.200">
    <property type="match status" value="1"/>
</dbReference>
<dbReference type="Gene3D" id="3.30.70.980">
    <property type="match status" value="2"/>
</dbReference>
<dbReference type="HAMAP" id="MF_00693">
    <property type="entry name" value="Transcrip_reg_TACO1"/>
    <property type="match status" value="1"/>
</dbReference>
<dbReference type="HAMAP" id="MF_00918">
    <property type="entry name" value="Transcrip_reg_TACO1_YeeN"/>
    <property type="match status" value="1"/>
</dbReference>
<dbReference type="InterPro" id="IPR017856">
    <property type="entry name" value="Integrase-like_N"/>
</dbReference>
<dbReference type="InterPro" id="IPR048300">
    <property type="entry name" value="TACO1_YebC-like_2nd/3rd_dom"/>
</dbReference>
<dbReference type="InterPro" id="IPR049083">
    <property type="entry name" value="TACO1_YebC_N"/>
</dbReference>
<dbReference type="InterPro" id="IPR002876">
    <property type="entry name" value="Transcrip_reg_TACO1-like"/>
</dbReference>
<dbReference type="InterPro" id="IPR026564">
    <property type="entry name" value="Transcrip_reg_TACO1-like_dom3"/>
</dbReference>
<dbReference type="InterPro" id="IPR026562">
    <property type="entry name" value="Transcrip_reg_TACO1_YeeN"/>
</dbReference>
<dbReference type="InterPro" id="IPR029072">
    <property type="entry name" value="YebC-like"/>
</dbReference>
<dbReference type="NCBIfam" id="NF001030">
    <property type="entry name" value="PRK00110.1"/>
    <property type="match status" value="1"/>
</dbReference>
<dbReference type="NCBIfam" id="NF009044">
    <property type="entry name" value="PRK12378.1"/>
    <property type="match status" value="1"/>
</dbReference>
<dbReference type="NCBIfam" id="TIGR01033">
    <property type="entry name" value="YebC/PmpR family DNA-binding transcriptional regulator"/>
    <property type="match status" value="1"/>
</dbReference>
<dbReference type="PANTHER" id="PTHR12532">
    <property type="entry name" value="TRANSLATIONAL ACTIVATOR OF CYTOCHROME C OXIDASE 1"/>
    <property type="match status" value="1"/>
</dbReference>
<dbReference type="PANTHER" id="PTHR12532:SF0">
    <property type="entry name" value="TRANSLATIONAL ACTIVATOR OF CYTOCHROME C OXIDASE 1"/>
    <property type="match status" value="1"/>
</dbReference>
<dbReference type="Pfam" id="PF20772">
    <property type="entry name" value="TACO1_YebC_N"/>
    <property type="match status" value="1"/>
</dbReference>
<dbReference type="Pfam" id="PF01709">
    <property type="entry name" value="Transcrip_reg"/>
    <property type="match status" value="1"/>
</dbReference>
<dbReference type="SUPFAM" id="SSF75625">
    <property type="entry name" value="YebC-like"/>
    <property type="match status" value="1"/>
</dbReference>
<gene>
    <name type="ordered locus">Exig_1693</name>
</gene>
<organism>
    <name type="scientific">Exiguobacterium sibiricum (strain DSM 17290 / CCUG 55495 / CIP 109462 / JCM 13490 / 255-15)</name>
    <dbReference type="NCBI Taxonomy" id="262543"/>
    <lineage>
        <taxon>Bacteria</taxon>
        <taxon>Bacillati</taxon>
        <taxon>Bacillota</taxon>
        <taxon>Bacilli</taxon>
        <taxon>Bacillales</taxon>
        <taxon>Bacillales Family XII. Incertae Sedis</taxon>
        <taxon>Exiguobacterium</taxon>
    </lineage>
</organism>
<reference key="1">
    <citation type="submission" date="2008-04" db="EMBL/GenBank/DDBJ databases">
        <title>Complete sequence of chromosome of Exiguobacterium sibiricum 255-15.</title>
        <authorList>
            <consortium name="US DOE Joint Genome Institute"/>
            <person name="Copeland A."/>
            <person name="Lucas S."/>
            <person name="Lapidus A."/>
            <person name="Glavina del Rio T."/>
            <person name="Dalin E."/>
            <person name="Tice H."/>
            <person name="Bruce D."/>
            <person name="Goodwin L."/>
            <person name="Pitluck S."/>
            <person name="Kiss H."/>
            <person name="Chertkov O."/>
            <person name="Monk C."/>
            <person name="Brettin T."/>
            <person name="Detter J.C."/>
            <person name="Han C."/>
            <person name="Kuske C.R."/>
            <person name="Schmutz J."/>
            <person name="Larimer F."/>
            <person name="Land M."/>
            <person name="Hauser L."/>
            <person name="Kyrpides N."/>
            <person name="Mikhailova N."/>
            <person name="Vishnivetskaya T."/>
            <person name="Rodrigues D.F."/>
            <person name="Gilichinsky D."/>
            <person name="Tiedje J."/>
            <person name="Richardson P."/>
        </authorList>
    </citation>
    <scope>NUCLEOTIDE SEQUENCE [LARGE SCALE GENOMIC DNA]</scope>
    <source>
        <strain>DSM 17290 / CCUG 55495 / CIP 109462 / JCM 13490 / 255-15</strain>
    </source>
</reference>
<name>Y1693_EXIS2</name>
<feature type="chain" id="PRO_1000132192" description="Probable transcriptional regulatory protein Exig_1693">
    <location>
        <begin position="1"/>
        <end position="237"/>
    </location>
</feature>